<sequence>MKKTKTILDILKMKSDGEKITVLTCYDYATAGIMDGCGIDMILVGDSAGVVCAGYDNTLPVTMEEMIYHTKAVMRANPKALVVSDMPFLSYQIDLATARLNAGRLIKEAGAAAVKLEGGLNVVATIEAIVAMDVPVMGHIGLTPQSLHRMGGYRVQGRKDEQAEKLLADARAVEAAGAFAVVLEGIPMRLAERITRELTIPTIGIGAGPSCDGQVLVIHDILGLCEKYSPKFVKQYVDLKPIMAEAINSYIAEVKGGAFPTEGHSFH</sequence>
<comment type="function">
    <text evidence="1">Catalyzes the reversible reaction in which hydroxymethyl group from 5,10-methylenetetrahydrofolate is transferred onto alpha-ketoisovalerate to form ketopantoate.</text>
</comment>
<comment type="catalytic activity">
    <reaction evidence="1">
        <text>3-methyl-2-oxobutanoate + (6R)-5,10-methylene-5,6,7,8-tetrahydrofolate + H2O = 2-dehydropantoate + (6S)-5,6,7,8-tetrahydrofolate</text>
        <dbReference type="Rhea" id="RHEA:11824"/>
        <dbReference type="ChEBI" id="CHEBI:11561"/>
        <dbReference type="ChEBI" id="CHEBI:11851"/>
        <dbReference type="ChEBI" id="CHEBI:15377"/>
        <dbReference type="ChEBI" id="CHEBI:15636"/>
        <dbReference type="ChEBI" id="CHEBI:57453"/>
        <dbReference type="EC" id="2.1.2.11"/>
    </reaction>
</comment>
<comment type="cofactor">
    <cofactor evidence="1">
        <name>Mg(2+)</name>
        <dbReference type="ChEBI" id="CHEBI:18420"/>
    </cofactor>
    <text evidence="1">Binds 1 Mg(2+) ion per subunit.</text>
</comment>
<comment type="pathway">
    <text evidence="1">Cofactor biosynthesis; (R)-pantothenate biosynthesis; (R)-pantoate from 3-methyl-2-oxobutanoate: step 1/2.</text>
</comment>
<comment type="subunit">
    <text evidence="1">Homodecamer; pentamer of dimers.</text>
</comment>
<comment type="subcellular location">
    <subcellularLocation>
        <location evidence="1">Cytoplasm</location>
    </subcellularLocation>
</comment>
<comment type="similarity">
    <text evidence="1">Belongs to the PanB family.</text>
</comment>
<feature type="chain" id="PRO_1000076827" description="3-methyl-2-oxobutanoate hydroxymethyltransferase">
    <location>
        <begin position="1"/>
        <end position="267"/>
    </location>
</feature>
<feature type="active site" description="Proton acceptor" evidence="1">
    <location>
        <position position="184"/>
    </location>
</feature>
<feature type="binding site" evidence="1">
    <location>
        <begin position="46"/>
        <end position="47"/>
    </location>
    <ligand>
        <name>3-methyl-2-oxobutanoate</name>
        <dbReference type="ChEBI" id="CHEBI:11851"/>
    </ligand>
</feature>
<feature type="binding site" evidence="1">
    <location>
        <position position="46"/>
    </location>
    <ligand>
        <name>Mg(2+)</name>
        <dbReference type="ChEBI" id="CHEBI:18420"/>
    </ligand>
</feature>
<feature type="binding site" evidence="1">
    <location>
        <position position="85"/>
    </location>
    <ligand>
        <name>3-methyl-2-oxobutanoate</name>
        <dbReference type="ChEBI" id="CHEBI:11851"/>
    </ligand>
</feature>
<feature type="binding site" evidence="1">
    <location>
        <position position="85"/>
    </location>
    <ligand>
        <name>Mg(2+)</name>
        <dbReference type="ChEBI" id="CHEBI:18420"/>
    </ligand>
</feature>
<feature type="binding site" evidence="1">
    <location>
        <position position="115"/>
    </location>
    <ligand>
        <name>3-methyl-2-oxobutanoate</name>
        <dbReference type="ChEBI" id="CHEBI:11851"/>
    </ligand>
</feature>
<feature type="binding site" evidence="1">
    <location>
        <position position="117"/>
    </location>
    <ligand>
        <name>Mg(2+)</name>
        <dbReference type="ChEBI" id="CHEBI:18420"/>
    </ligand>
</feature>
<evidence type="ECO:0000255" key="1">
    <source>
        <dbReference type="HAMAP-Rule" id="MF_00156"/>
    </source>
</evidence>
<name>PANB_GEOUR</name>
<reference key="1">
    <citation type="submission" date="2007-05" db="EMBL/GenBank/DDBJ databases">
        <title>Complete sequence of Geobacter uraniireducens Rf4.</title>
        <authorList>
            <consortium name="US DOE Joint Genome Institute"/>
            <person name="Copeland A."/>
            <person name="Lucas S."/>
            <person name="Lapidus A."/>
            <person name="Barry K."/>
            <person name="Detter J.C."/>
            <person name="Glavina del Rio T."/>
            <person name="Hammon N."/>
            <person name="Israni S."/>
            <person name="Dalin E."/>
            <person name="Tice H."/>
            <person name="Pitluck S."/>
            <person name="Chertkov O."/>
            <person name="Brettin T."/>
            <person name="Bruce D."/>
            <person name="Han C."/>
            <person name="Schmutz J."/>
            <person name="Larimer F."/>
            <person name="Land M."/>
            <person name="Hauser L."/>
            <person name="Kyrpides N."/>
            <person name="Mikhailova N."/>
            <person name="Shelobolina E."/>
            <person name="Aklujkar M."/>
            <person name="Lovley D."/>
            <person name="Richardson P."/>
        </authorList>
    </citation>
    <scope>NUCLEOTIDE SEQUENCE [LARGE SCALE GENOMIC DNA]</scope>
    <source>
        <strain>ATCC BAA-1134 / JCM 13001 / Rf4</strain>
    </source>
</reference>
<keyword id="KW-0963">Cytoplasm</keyword>
<keyword id="KW-0460">Magnesium</keyword>
<keyword id="KW-0479">Metal-binding</keyword>
<keyword id="KW-0566">Pantothenate biosynthesis</keyword>
<keyword id="KW-1185">Reference proteome</keyword>
<keyword id="KW-0808">Transferase</keyword>
<dbReference type="EC" id="2.1.2.11" evidence="1"/>
<dbReference type="EMBL" id="CP000698">
    <property type="protein sequence ID" value="ABQ26268.1"/>
    <property type="molecule type" value="Genomic_DNA"/>
</dbReference>
<dbReference type="RefSeq" id="WP_011938970.1">
    <property type="nucleotide sequence ID" value="NC_009483.1"/>
</dbReference>
<dbReference type="SMR" id="A5G3A0"/>
<dbReference type="STRING" id="351605.Gura_2078"/>
<dbReference type="KEGG" id="gur:Gura_2078"/>
<dbReference type="HOGENOM" id="CLU_036645_1_0_7"/>
<dbReference type="OrthoDB" id="9781789at2"/>
<dbReference type="UniPathway" id="UPA00028">
    <property type="reaction ID" value="UER00003"/>
</dbReference>
<dbReference type="Proteomes" id="UP000006695">
    <property type="component" value="Chromosome"/>
</dbReference>
<dbReference type="GO" id="GO:0005737">
    <property type="term" value="C:cytoplasm"/>
    <property type="evidence" value="ECO:0007669"/>
    <property type="project" value="UniProtKB-SubCell"/>
</dbReference>
<dbReference type="GO" id="GO:0003864">
    <property type="term" value="F:3-methyl-2-oxobutanoate hydroxymethyltransferase activity"/>
    <property type="evidence" value="ECO:0007669"/>
    <property type="project" value="UniProtKB-UniRule"/>
</dbReference>
<dbReference type="GO" id="GO:0000287">
    <property type="term" value="F:magnesium ion binding"/>
    <property type="evidence" value="ECO:0007669"/>
    <property type="project" value="TreeGrafter"/>
</dbReference>
<dbReference type="GO" id="GO:0015940">
    <property type="term" value="P:pantothenate biosynthetic process"/>
    <property type="evidence" value="ECO:0007669"/>
    <property type="project" value="UniProtKB-UniRule"/>
</dbReference>
<dbReference type="CDD" id="cd06557">
    <property type="entry name" value="KPHMT-like"/>
    <property type="match status" value="1"/>
</dbReference>
<dbReference type="FunFam" id="3.20.20.60:FF:000003">
    <property type="entry name" value="3-methyl-2-oxobutanoate hydroxymethyltransferase"/>
    <property type="match status" value="1"/>
</dbReference>
<dbReference type="Gene3D" id="3.20.20.60">
    <property type="entry name" value="Phosphoenolpyruvate-binding domains"/>
    <property type="match status" value="1"/>
</dbReference>
<dbReference type="HAMAP" id="MF_00156">
    <property type="entry name" value="PanB"/>
    <property type="match status" value="1"/>
</dbReference>
<dbReference type="InterPro" id="IPR003700">
    <property type="entry name" value="Pantoate_hydroxy_MeTrfase"/>
</dbReference>
<dbReference type="InterPro" id="IPR015813">
    <property type="entry name" value="Pyrv/PenolPyrv_kinase-like_dom"/>
</dbReference>
<dbReference type="InterPro" id="IPR040442">
    <property type="entry name" value="Pyrv_kinase-like_dom_sf"/>
</dbReference>
<dbReference type="NCBIfam" id="TIGR00222">
    <property type="entry name" value="panB"/>
    <property type="match status" value="1"/>
</dbReference>
<dbReference type="NCBIfam" id="NF001452">
    <property type="entry name" value="PRK00311.1"/>
    <property type="match status" value="1"/>
</dbReference>
<dbReference type="PANTHER" id="PTHR20881">
    <property type="entry name" value="3-METHYL-2-OXOBUTANOATE HYDROXYMETHYLTRANSFERASE"/>
    <property type="match status" value="1"/>
</dbReference>
<dbReference type="PANTHER" id="PTHR20881:SF0">
    <property type="entry name" value="3-METHYL-2-OXOBUTANOATE HYDROXYMETHYLTRANSFERASE"/>
    <property type="match status" value="1"/>
</dbReference>
<dbReference type="Pfam" id="PF02548">
    <property type="entry name" value="Pantoate_transf"/>
    <property type="match status" value="1"/>
</dbReference>
<dbReference type="PIRSF" id="PIRSF000388">
    <property type="entry name" value="Pantoate_hydroxy_MeTrfase"/>
    <property type="match status" value="1"/>
</dbReference>
<dbReference type="SUPFAM" id="SSF51621">
    <property type="entry name" value="Phosphoenolpyruvate/pyruvate domain"/>
    <property type="match status" value="1"/>
</dbReference>
<gene>
    <name evidence="1" type="primary">panB</name>
    <name type="ordered locus">Gura_2078</name>
</gene>
<proteinExistence type="inferred from homology"/>
<protein>
    <recommendedName>
        <fullName evidence="1">3-methyl-2-oxobutanoate hydroxymethyltransferase</fullName>
        <ecNumber evidence="1">2.1.2.11</ecNumber>
    </recommendedName>
    <alternativeName>
        <fullName evidence="1">Ketopantoate hydroxymethyltransferase</fullName>
        <shortName evidence="1">KPHMT</shortName>
    </alternativeName>
</protein>
<accession>A5G3A0</accession>
<organism>
    <name type="scientific">Geotalea uraniireducens (strain Rf4)</name>
    <name type="common">Geobacter uraniireducens</name>
    <dbReference type="NCBI Taxonomy" id="351605"/>
    <lineage>
        <taxon>Bacteria</taxon>
        <taxon>Pseudomonadati</taxon>
        <taxon>Thermodesulfobacteriota</taxon>
        <taxon>Desulfuromonadia</taxon>
        <taxon>Geobacterales</taxon>
        <taxon>Geobacteraceae</taxon>
        <taxon>Geotalea</taxon>
    </lineage>
</organism>